<organism>
    <name type="scientific">Bacillus thuringiensis subsp. konkukian (strain 97-27)</name>
    <dbReference type="NCBI Taxonomy" id="281309"/>
    <lineage>
        <taxon>Bacteria</taxon>
        <taxon>Bacillati</taxon>
        <taxon>Bacillota</taxon>
        <taxon>Bacilli</taxon>
        <taxon>Bacillales</taxon>
        <taxon>Bacillaceae</taxon>
        <taxon>Bacillus</taxon>
        <taxon>Bacillus cereus group</taxon>
    </lineage>
</organism>
<name>TRUA1_BACHK</name>
<protein>
    <recommendedName>
        <fullName evidence="1">tRNA pseudouridine synthase A 1</fullName>
        <ecNumber evidence="1">5.4.99.12</ecNumber>
    </recommendedName>
    <alternativeName>
        <fullName evidence="1">tRNA pseudouridine(38-40) synthase</fullName>
    </alternativeName>
    <alternativeName>
        <fullName evidence="1">tRNA pseudouridylate synthase I 1</fullName>
    </alternativeName>
    <alternativeName>
        <fullName evidence="1">tRNA-uridine isomerase I 1</fullName>
    </alternativeName>
</protein>
<keyword id="KW-0413">Isomerase</keyword>
<keyword id="KW-0819">tRNA processing</keyword>
<accession>Q6HPM7</accession>
<dbReference type="EC" id="5.4.99.12" evidence="1"/>
<dbReference type="EMBL" id="AE017355">
    <property type="protein sequence ID" value="AAT58924.1"/>
    <property type="molecule type" value="Genomic_DNA"/>
</dbReference>
<dbReference type="RefSeq" id="YP_034493.1">
    <property type="nucleotide sequence ID" value="NC_005957.1"/>
</dbReference>
<dbReference type="SMR" id="Q6HPM7"/>
<dbReference type="KEGG" id="btk:BT9727_0137"/>
<dbReference type="PATRIC" id="fig|281309.8.peg.139"/>
<dbReference type="HOGENOM" id="CLU_014673_0_1_9"/>
<dbReference type="Proteomes" id="UP000001301">
    <property type="component" value="Chromosome"/>
</dbReference>
<dbReference type="GO" id="GO:0003723">
    <property type="term" value="F:RNA binding"/>
    <property type="evidence" value="ECO:0007669"/>
    <property type="project" value="InterPro"/>
</dbReference>
<dbReference type="GO" id="GO:0160147">
    <property type="term" value="F:tRNA pseudouridine(38-40) synthase activity"/>
    <property type="evidence" value="ECO:0007669"/>
    <property type="project" value="UniProtKB-EC"/>
</dbReference>
<dbReference type="GO" id="GO:0031119">
    <property type="term" value="P:tRNA pseudouridine synthesis"/>
    <property type="evidence" value="ECO:0007669"/>
    <property type="project" value="UniProtKB-UniRule"/>
</dbReference>
<dbReference type="CDD" id="cd02570">
    <property type="entry name" value="PseudoU_synth_EcTruA"/>
    <property type="match status" value="1"/>
</dbReference>
<dbReference type="FunFam" id="3.30.70.580:FF:000001">
    <property type="entry name" value="tRNA pseudouridine synthase A"/>
    <property type="match status" value="1"/>
</dbReference>
<dbReference type="FunFam" id="3.30.70.660:FF:000004">
    <property type="entry name" value="tRNA pseudouridine synthase A"/>
    <property type="match status" value="1"/>
</dbReference>
<dbReference type="Gene3D" id="3.30.70.660">
    <property type="entry name" value="Pseudouridine synthase I, catalytic domain, C-terminal subdomain"/>
    <property type="match status" value="1"/>
</dbReference>
<dbReference type="Gene3D" id="3.30.70.580">
    <property type="entry name" value="Pseudouridine synthase I, catalytic domain, N-terminal subdomain"/>
    <property type="match status" value="1"/>
</dbReference>
<dbReference type="HAMAP" id="MF_00171">
    <property type="entry name" value="TruA"/>
    <property type="match status" value="1"/>
</dbReference>
<dbReference type="InterPro" id="IPR020103">
    <property type="entry name" value="PsdUridine_synth_cat_dom_sf"/>
</dbReference>
<dbReference type="InterPro" id="IPR001406">
    <property type="entry name" value="PsdUridine_synth_TruA"/>
</dbReference>
<dbReference type="InterPro" id="IPR020097">
    <property type="entry name" value="PsdUridine_synth_TruA_a/b_dom"/>
</dbReference>
<dbReference type="InterPro" id="IPR020095">
    <property type="entry name" value="PsdUridine_synth_TruA_C"/>
</dbReference>
<dbReference type="InterPro" id="IPR020094">
    <property type="entry name" value="TruA/RsuA/RluB/E/F_N"/>
</dbReference>
<dbReference type="NCBIfam" id="TIGR00071">
    <property type="entry name" value="hisT_truA"/>
    <property type="match status" value="1"/>
</dbReference>
<dbReference type="PANTHER" id="PTHR11142">
    <property type="entry name" value="PSEUDOURIDYLATE SYNTHASE"/>
    <property type="match status" value="1"/>
</dbReference>
<dbReference type="PANTHER" id="PTHR11142:SF0">
    <property type="entry name" value="TRNA PSEUDOURIDINE SYNTHASE-LIKE 1"/>
    <property type="match status" value="1"/>
</dbReference>
<dbReference type="Pfam" id="PF01416">
    <property type="entry name" value="PseudoU_synth_1"/>
    <property type="match status" value="2"/>
</dbReference>
<dbReference type="PIRSF" id="PIRSF001430">
    <property type="entry name" value="tRNA_psdUrid_synth"/>
    <property type="match status" value="1"/>
</dbReference>
<dbReference type="SUPFAM" id="SSF55120">
    <property type="entry name" value="Pseudouridine synthase"/>
    <property type="match status" value="1"/>
</dbReference>
<proteinExistence type="inferred from homology"/>
<gene>
    <name evidence="1" type="primary">truA1</name>
    <name type="ordered locus">BT9727_0137</name>
</gene>
<feature type="chain" id="PRO_0000057329" description="tRNA pseudouridine synthase A 1">
    <location>
        <begin position="1"/>
        <end position="247"/>
    </location>
</feature>
<feature type="active site" description="Nucleophile" evidence="1">
    <location>
        <position position="53"/>
    </location>
</feature>
<feature type="binding site" evidence="1">
    <location>
        <position position="111"/>
    </location>
    <ligand>
        <name>substrate</name>
    </ligand>
</feature>
<sequence>MDRIKCTVAYDGMHFCGYQIQPQHRTVQQEIEKALQKLHKGELVRVQASGRTDSTVHAKGQVIHFDTPLSLEEWQWSNALNTMLPDDIVITQVEKKTEEFHARYGVERKEYRYRVLVSKTADVFRRNYVYQYPYPLEVNSIRKAIPYFIGTHDFTSFCSAKTDKKDKVRTIYEIELIEQDDELIFRFVGNGFLYNMVRIIVGTLLNVGQGKLDPDSIPEILAKQNRQFAGKMAPGHGLYLWQVNYNN</sequence>
<comment type="function">
    <text evidence="1">Formation of pseudouridine at positions 38, 39 and 40 in the anticodon stem and loop of transfer RNAs.</text>
</comment>
<comment type="catalytic activity">
    <reaction evidence="1">
        <text>uridine(38/39/40) in tRNA = pseudouridine(38/39/40) in tRNA</text>
        <dbReference type="Rhea" id="RHEA:22376"/>
        <dbReference type="Rhea" id="RHEA-COMP:10085"/>
        <dbReference type="Rhea" id="RHEA-COMP:10087"/>
        <dbReference type="ChEBI" id="CHEBI:65314"/>
        <dbReference type="ChEBI" id="CHEBI:65315"/>
        <dbReference type="EC" id="5.4.99.12"/>
    </reaction>
</comment>
<comment type="subunit">
    <text evidence="1">Homodimer.</text>
</comment>
<comment type="similarity">
    <text evidence="1">Belongs to the tRNA pseudouridine synthase TruA family.</text>
</comment>
<reference key="1">
    <citation type="journal article" date="2006" name="J. Bacteriol.">
        <title>Pathogenomic sequence analysis of Bacillus cereus and Bacillus thuringiensis isolates closely related to Bacillus anthracis.</title>
        <authorList>
            <person name="Han C.S."/>
            <person name="Xie G."/>
            <person name="Challacombe J.F."/>
            <person name="Altherr M.R."/>
            <person name="Bhotika S.S."/>
            <person name="Bruce D."/>
            <person name="Campbell C.S."/>
            <person name="Campbell M.L."/>
            <person name="Chen J."/>
            <person name="Chertkov O."/>
            <person name="Cleland C."/>
            <person name="Dimitrijevic M."/>
            <person name="Doggett N.A."/>
            <person name="Fawcett J.J."/>
            <person name="Glavina T."/>
            <person name="Goodwin L.A."/>
            <person name="Hill K.K."/>
            <person name="Hitchcock P."/>
            <person name="Jackson P.J."/>
            <person name="Keim P."/>
            <person name="Kewalramani A.R."/>
            <person name="Longmire J."/>
            <person name="Lucas S."/>
            <person name="Malfatti S."/>
            <person name="McMurry K."/>
            <person name="Meincke L.J."/>
            <person name="Misra M."/>
            <person name="Moseman B.L."/>
            <person name="Mundt M."/>
            <person name="Munk A.C."/>
            <person name="Okinaka R.T."/>
            <person name="Parson-Quintana B."/>
            <person name="Reilly L.P."/>
            <person name="Richardson P."/>
            <person name="Robinson D.L."/>
            <person name="Rubin E."/>
            <person name="Saunders E."/>
            <person name="Tapia R."/>
            <person name="Tesmer J.G."/>
            <person name="Thayer N."/>
            <person name="Thompson L.S."/>
            <person name="Tice H."/>
            <person name="Ticknor L.O."/>
            <person name="Wills P.L."/>
            <person name="Brettin T.S."/>
            <person name="Gilna P."/>
        </authorList>
    </citation>
    <scope>NUCLEOTIDE SEQUENCE [LARGE SCALE GENOMIC DNA]</scope>
    <source>
        <strain>97-27</strain>
    </source>
</reference>
<evidence type="ECO:0000255" key="1">
    <source>
        <dbReference type="HAMAP-Rule" id="MF_00171"/>
    </source>
</evidence>